<accession>A6X5L4</accession>
<organism>
    <name type="scientific">Brucella anthropi (strain ATCC 49188 / DSM 6882 / CCUG 24695 / JCM 21032 / LMG 3331 / NBRC 15819 / NCTC 12168 / Alc 37)</name>
    <name type="common">Ochrobactrum anthropi</name>
    <dbReference type="NCBI Taxonomy" id="439375"/>
    <lineage>
        <taxon>Bacteria</taxon>
        <taxon>Pseudomonadati</taxon>
        <taxon>Pseudomonadota</taxon>
        <taxon>Alphaproteobacteria</taxon>
        <taxon>Hyphomicrobiales</taxon>
        <taxon>Brucellaceae</taxon>
        <taxon>Brucella/Ochrobactrum group</taxon>
        <taxon>Brucella</taxon>
    </lineage>
</organism>
<comment type="function">
    <text evidence="1">Specifically methylates the uridine in position 2552 of 23S rRNA at the 2'-O position of the ribose in the fully assembled 50S ribosomal subunit.</text>
</comment>
<comment type="catalytic activity">
    <reaction evidence="1">
        <text>uridine(2552) in 23S rRNA + S-adenosyl-L-methionine = 2'-O-methyluridine(2552) in 23S rRNA + S-adenosyl-L-homocysteine + H(+)</text>
        <dbReference type="Rhea" id="RHEA:42720"/>
        <dbReference type="Rhea" id="RHEA-COMP:10202"/>
        <dbReference type="Rhea" id="RHEA-COMP:10203"/>
        <dbReference type="ChEBI" id="CHEBI:15378"/>
        <dbReference type="ChEBI" id="CHEBI:57856"/>
        <dbReference type="ChEBI" id="CHEBI:59789"/>
        <dbReference type="ChEBI" id="CHEBI:65315"/>
        <dbReference type="ChEBI" id="CHEBI:74478"/>
        <dbReference type="EC" id="2.1.1.166"/>
    </reaction>
</comment>
<comment type="subcellular location">
    <subcellularLocation>
        <location evidence="1">Cytoplasm</location>
    </subcellularLocation>
</comment>
<comment type="similarity">
    <text evidence="1">Belongs to the class I-like SAM-binding methyltransferase superfamily. RNA methyltransferase RlmE family.</text>
</comment>
<sequence length="240" mass="26264">MSKAGGNKGGVKTGGRGGAGSSNLQVRVKKKAGTIKESSRRWLQRHLNDPYVHKSRQDGYRSRAAYKLIEINDRYDLLKKGQKIIDLGAAPGGWSQIAAKIVGSTDENPHVVGIDYLHVDPLPGVVLLEMDFLDDEAPQKLMDALGDKPDLVISDMAAPTTGHRRTDHLRTVHLCEVAADFAISVLKPGGHFLTKTFQGGTENELLALLKQKFRSVHHVKPPASRAESVELYLLARDFKG</sequence>
<gene>
    <name evidence="1" type="primary">rlmE</name>
    <name evidence="1" type="synonym">ftsJ</name>
    <name evidence="1" type="synonym">rrmJ</name>
    <name type="ordered locus">Oant_3812</name>
</gene>
<proteinExistence type="inferred from homology"/>
<evidence type="ECO:0000255" key="1">
    <source>
        <dbReference type="HAMAP-Rule" id="MF_01547"/>
    </source>
</evidence>
<evidence type="ECO:0000256" key="2">
    <source>
        <dbReference type="SAM" id="MobiDB-lite"/>
    </source>
</evidence>
<reference key="1">
    <citation type="journal article" date="2011" name="J. Bacteriol.">
        <title>Genome of Ochrobactrum anthropi ATCC 49188 T, a versatile opportunistic pathogen and symbiont of several eukaryotic hosts.</title>
        <authorList>
            <person name="Chain P.S."/>
            <person name="Lang D.M."/>
            <person name="Comerci D.J."/>
            <person name="Malfatti S.A."/>
            <person name="Vergez L.M."/>
            <person name="Shin M."/>
            <person name="Ugalde R.A."/>
            <person name="Garcia E."/>
            <person name="Tolmasky M.E."/>
        </authorList>
    </citation>
    <scope>NUCLEOTIDE SEQUENCE [LARGE SCALE GENOMIC DNA]</scope>
    <source>
        <strain>ATCC 49188 / DSM 6882 / CCUG 24695 / JCM 21032 / LMG 3331 / NBRC 15819 / NCTC 12168 / Alc 37</strain>
    </source>
</reference>
<keyword id="KW-0963">Cytoplasm</keyword>
<keyword id="KW-0489">Methyltransferase</keyword>
<keyword id="KW-1185">Reference proteome</keyword>
<keyword id="KW-0698">rRNA processing</keyword>
<keyword id="KW-0949">S-adenosyl-L-methionine</keyword>
<keyword id="KW-0808">Transferase</keyword>
<dbReference type="EC" id="2.1.1.166" evidence="1"/>
<dbReference type="EMBL" id="CP000759">
    <property type="protein sequence ID" value="ABS16518.1"/>
    <property type="molecule type" value="Genomic_DNA"/>
</dbReference>
<dbReference type="RefSeq" id="WP_012093175.1">
    <property type="nucleotide sequence ID" value="NC_009668.1"/>
</dbReference>
<dbReference type="SMR" id="A6X5L4"/>
<dbReference type="STRING" id="439375.Oant_3812"/>
<dbReference type="KEGG" id="oan:Oant_3812"/>
<dbReference type="PATRIC" id="fig|439375.7.peg.3977"/>
<dbReference type="eggNOG" id="COG0293">
    <property type="taxonomic scope" value="Bacteria"/>
</dbReference>
<dbReference type="HOGENOM" id="CLU_009422_4_0_5"/>
<dbReference type="PhylomeDB" id="A6X5L4"/>
<dbReference type="Proteomes" id="UP000002301">
    <property type="component" value="Chromosome 2"/>
</dbReference>
<dbReference type="GO" id="GO:0005737">
    <property type="term" value="C:cytoplasm"/>
    <property type="evidence" value="ECO:0007669"/>
    <property type="project" value="UniProtKB-SubCell"/>
</dbReference>
<dbReference type="GO" id="GO:0008650">
    <property type="term" value="F:rRNA (uridine-2'-O-)-methyltransferase activity"/>
    <property type="evidence" value="ECO:0007669"/>
    <property type="project" value="UniProtKB-UniRule"/>
</dbReference>
<dbReference type="Gene3D" id="3.40.50.150">
    <property type="entry name" value="Vaccinia Virus protein VP39"/>
    <property type="match status" value="1"/>
</dbReference>
<dbReference type="HAMAP" id="MF_01547">
    <property type="entry name" value="RNA_methyltr_E"/>
    <property type="match status" value="1"/>
</dbReference>
<dbReference type="InterPro" id="IPR050082">
    <property type="entry name" value="RNA_methyltr_RlmE"/>
</dbReference>
<dbReference type="InterPro" id="IPR002877">
    <property type="entry name" value="RNA_MeTrfase_FtsJ_dom"/>
</dbReference>
<dbReference type="InterPro" id="IPR015507">
    <property type="entry name" value="rRNA-MeTfrase_E"/>
</dbReference>
<dbReference type="InterPro" id="IPR029063">
    <property type="entry name" value="SAM-dependent_MTases_sf"/>
</dbReference>
<dbReference type="PANTHER" id="PTHR10920">
    <property type="entry name" value="RIBOSOMAL RNA METHYLTRANSFERASE"/>
    <property type="match status" value="1"/>
</dbReference>
<dbReference type="PANTHER" id="PTHR10920:SF18">
    <property type="entry name" value="RRNA METHYLTRANSFERASE 2, MITOCHONDRIAL"/>
    <property type="match status" value="1"/>
</dbReference>
<dbReference type="Pfam" id="PF01728">
    <property type="entry name" value="FtsJ"/>
    <property type="match status" value="1"/>
</dbReference>
<dbReference type="PIRSF" id="PIRSF005461">
    <property type="entry name" value="23S_rRNA_mtase"/>
    <property type="match status" value="1"/>
</dbReference>
<dbReference type="SUPFAM" id="SSF53335">
    <property type="entry name" value="S-adenosyl-L-methionine-dependent methyltransferases"/>
    <property type="match status" value="1"/>
</dbReference>
<feature type="chain" id="PRO_1000087696" description="Ribosomal RNA large subunit methyltransferase E">
    <location>
        <begin position="1"/>
        <end position="240"/>
    </location>
</feature>
<feature type="region of interest" description="Disordered" evidence="2">
    <location>
        <begin position="1"/>
        <end position="27"/>
    </location>
</feature>
<feature type="compositionally biased region" description="Gly residues" evidence="2">
    <location>
        <begin position="1"/>
        <end position="20"/>
    </location>
</feature>
<feature type="active site" description="Proton acceptor" evidence="1">
    <location>
        <position position="195"/>
    </location>
</feature>
<feature type="binding site" evidence="1">
    <location>
        <position position="92"/>
    </location>
    <ligand>
        <name>S-adenosyl-L-methionine</name>
        <dbReference type="ChEBI" id="CHEBI:59789"/>
    </ligand>
</feature>
<feature type="binding site" evidence="1">
    <location>
        <position position="94"/>
    </location>
    <ligand>
        <name>S-adenosyl-L-methionine</name>
        <dbReference type="ChEBI" id="CHEBI:59789"/>
    </ligand>
</feature>
<feature type="binding site" evidence="1">
    <location>
        <position position="115"/>
    </location>
    <ligand>
        <name>S-adenosyl-L-methionine</name>
        <dbReference type="ChEBI" id="CHEBI:59789"/>
    </ligand>
</feature>
<feature type="binding site" evidence="1">
    <location>
        <position position="131"/>
    </location>
    <ligand>
        <name>S-adenosyl-L-methionine</name>
        <dbReference type="ChEBI" id="CHEBI:59789"/>
    </ligand>
</feature>
<feature type="binding site" evidence="1">
    <location>
        <position position="155"/>
    </location>
    <ligand>
        <name>S-adenosyl-L-methionine</name>
        <dbReference type="ChEBI" id="CHEBI:59789"/>
    </ligand>
</feature>
<name>RLME_BRUA4</name>
<protein>
    <recommendedName>
        <fullName evidence="1">Ribosomal RNA large subunit methyltransferase E</fullName>
        <ecNumber evidence="1">2.1.1.166</ecNumber>
    </recommendedName>
    <alternativeName>
        <fullName evidence="1">23S rRNA Um2552 methyltransferase</fullName>
    </alternativeName>
    <alternativeName>
        <fullName evidence="1">rRNA (uridine-2'-O-)-methyltransferase</fullName>
    </alternativeName>
</protein>